<sequence>MRTLLLTLVVVTIVCLDLGNSLICYVTRDGKTATCPPGQKCEKYAVSASHTGHWFHRWHCTSTCHEGPYNVCCSTDFCNR</sequence>
<accession>F5CPE0</accession>
<comment type="function">
    <text evidence="2">Neurotoxin. Blocks muscular nicotinic acetylcholine receptors (nAChR).</text>
</comment>
<comment type="subcellular location">
    <subcellularLocation>
        <location evidence="3">Secreted</location>
    </subcellularLocation>
</comment>
<comment type="tissue specificity">
    <text evidence="4">Expressed by the venom gland.</text>
</comment>
<comment type="mass spectrometry">
    <text>Average mass.</text>
</comment>
<comment type="similarity">
    <text evidence="4">Belongs to the three-finger toxin family. Short-chain subfamily.</text>
</comment>
<name>3SX9_MICAT</name>
<keyword id="KW-0008">Acetylcholine receptor inhibiting toxin</keyword>
<keyword id="KW-0903">Direct protein sequencing</keyword>
<keyword id="KW-1015">Disulfide bond</keyword>
<keyword id="KW-0872">Ion channel impairing toxin</keyword>
<keyword id="KW-0528">Neurotoxin</keyword>
<keyword id="KW-0629">Postsynaptic neurotoxin</keyword>
<keyword id="KW-0964">Secreted</keyword>
<keyword id="KW-0732">Signal</keyword>
<keyword id="KW-0800">Toxin</keyword>
<proteinExistence type="evidence at protein level"/>
<organism>
    <name type="scientific">Micrurus altirostris</name>
    <name type="common">Uruguayan coral snake</name>
    <name type="synonym">Elaps altirostris</name>
    <dbReference type="NCBI Taxonomy" id="129457"/>
    <lineage>
        <taxon>Eukaryota</taxon>
        <taxon>Metazoa</taxon>
        <taxon>Chordata</taxon>
        <taxon>Craniata</taxon>
        <taxon>Vertebrata</taxon>
        <taxon>Euteleostomi</taxon>
        <taxon>Lepidosauria</taxon>
        <taxon>Squamata</taxon>
        <taxon>Bifurcata</taxon>
        <taxon>Unidentata</taxon>
        <taxon>Episquamata</taxon>
        <taxon>Toxicofera</taxon>
        <taxon>Serpentes</taxon>
        <taxon>Colubroidea</taxon>
        <taxon>Elapidae</taxon>
        <taxon>Elapinae</taxon>
        <taxon>Micrurus</taxon>
    </lineage>
</organism>
<reference key="1">
    <citation type="journal article" date="2011" name="J. Proteomics">
        <title>Snake venomics and venom gland transcriptomic analysis of Brazilian coral snakes, Micrurus altirostris and M. corallinus.</title>
        <authorList>
            <person name="Correa-Netto C."/>
            <person name="Junqueira-de-Azevedo Ide L."/>
            <person name="Silva D.A."/>
            <person name="Ho P.L."/>
            <person name="Leitao-de-Araujo M."/>
            <person name="Alves M.L."/>
            <person name="Sanz L."/>
            <person name="Foguel D."/>
            <person name="Zingali R.B."/>
            <person name="Calvete J.J."/>
        </authorList>
    </citation>
    <scope>NUCLEOTIDE SEQUENCE [MRNA]</scope>
    <scope>PROTEIN SEQUENCE OF 22-36</scope>
    <scope>MASS SPECTROMETRY</scope>
    <scope>SUBCELLULAR LOCATION</scope>
    <source>
        <tissue>Venom</tissue>
        <tissue>Venom gland</tissue>
    </source>
</reference>
<feature type="signal peptide" evidence="3">
    <location>
        <begin position="1"/>
        <end position="21"/>
    </location>
</feature>
<feature type="chain" id="PRO_0000422901" description="Three-finger toxin MALT0059C" evidence="5">
    <location>
        <begin position="22"/>
        <end position="80"/>
    </location>
</feature>
<feature type="disulfide bond" evidence="1">
    <location>
        <begin position="24"/>
        <end position="41"/>
    </location>
</feature>
<feature type="disulfide bond" evidence="1">
    <location>
        <begin position="35"/>
        <end position="60"/>
    </location>
</feature>
<feature type="disulfide bond" evidence="1">
    <location>
        <begin position="64"/>
        <end position="72"/>
    </location>
</feature>
<feature type="disulfide bond" evidence="1">
    <location>
        <begin position="73"/>
        <end position="78"/>
    </location>
</feature>
<feature type="sequence conflict" description="In Ref. 1; AA sequence." evidence="4" ref="1">
    <original>D</original>
    <variation>F</variation>
    <location>
        <position position="29"/>
    </location>
</feature>
<dbReference type="EMBL" id="JF754478">
    <property type="protein sequence ID" value="AED89567.1"/>
    <property type="molecule type" value="mRNA"/>
</dbReference>
<dbReference type="SMR" id="F5CPE0"/>
<dbReference type="GO" id="GO:0005576">
    <property type="term" value="C:extracellular region"/>
    <property type="evidence" value="ECO:0007669"/>
    <property type="project" value="UniProtKB-SubCell"/>
</dbReference>
<dbReference type="GO" id="GO:0030550">
    <property type="term" value="F:acetylcholine receptor inhibitor activity"/>
    <property type="evidence" value="ECO:0007669"/>
    <property type="project" value="UniProtKB-KW"/>
</dbReference>
<dbReference type="GO" id="GO:0099106">
    <property type="term" value="F:ion channel regulator activity"/>
    <property type="evidence" value="ECO:0007669"/>
    <property type="project" value="UniProtKB-KW"/>
</dbReference>
<dbReference type="GO" id="GO:0090729">
    <property type="term" value="F:toxin activity"/>
    <property type="evidence" value="ECO:0007669"/>
    <property type="project" value="UniProtKB-KW"/>
</dbReference>
<dbReference type="Gene3D" id="2.10.60.10">
    <property type="entry name" value="CD59"/>
    <property type="match status" value="1"/>
</dbReference>
<dbReference type="InterPro" id="IPR045860">
    <property type="entry name" value="Snake_toxin-like_sf"/>
</dbReference>
<dbReference type="SUPFAM" id="SSF57302">
    <property type="entry name" value="Snake toxin-like"/>
    <property type="match status" value="1"/>
</dbReference>
<protein>
    <recommendedName>
        <fullName evidence="6">Three-finger toxin MALT0059C</fullName>
        <shortName evidence="4">3FTx MALT0059C</shortName>
    </recommendedName>
</protein>
<evidence type="ECO:0000250" key="1">
    <source>
        <dbReference type="UniProtKB" id="P60301"/>
    </source>
</evidence>
<evidence type="ECO:0000250" key="2">
    <source>
        <dbReference type="UniProtKB" id="P86421"/>
    </source>
</evidence>
<evidence type="ECO:0000269" key="3">
    <source>
    </source>
</evidence>
<evidence type="ECO:0000305" key="4"/>
<evidence type="ECO:0000305" key="5">
    <source>
    </source>
</evidence>
<evidence type="ECO:0000312" key="6">
    <source>
        <dbReference type="EMBL" id="AED89567.1"/>
    </source>
</evidence>